<feature type="chain" id="PRO_1000003601" description="Small ribosomal subunit protein bS18">
    <location>
        <begin position="1"/>
        <end position="75"/>
    </location>
</feature>
<gene>
    <name evidence="1" type="primary">rpsR</name>
    <name type="ordered locus">Shew185_0713</name>
</gene>
<organism>
    <name type="scientific">Shewanella baltica (strain OS185)</name>
    <dbReference type="NCBI Taxonomy" id="402882"/>
    <lineage>
        <taxon>Bacteria</taxon>
        <taxon>Pseudomonadati</taxon>
        <taxon>Pseudomonadota</taxon>
        <taxon>Gammaproteobacteria</taxon>
        <taxon>Alteromonadales</taxon>
        <taxon>Shewanellaceae</taxon>
        <taxon>Shewanella</taxon>
    </lineage>
</organism>
<keyword id="KW-0687">Ribonucleoprotein</keyword>
<keyword id="KW-0689">Ribosomal protein</keyword>
<keyword id="KW-0694">RNA-binding</keyword>
<keyword id="KW-0699">rRNA-binding</keyword>
<proteinExistence type="inferred from homology"/>
<comment type="function">
    <text evidence="1">Binds as a heterodimer with protein bS6 to the central domain of the 16S rRNA, where it helps stabilize the platform of the 30S subunit.</text>
</comment>
<comment type="subunit">
    <text evidence="1">Part of the 30S ribosomal subunit. Forms a tight heterodimer with protein bS6.</text>
</comment>
<comment type="similarity">
    <text evidence="1">Belongs to the bacterial ribosomal protein bS18 family.</text>
</comment>
<protein>
    <recommendedName>
        <fullName evidence="1">Small ribosomal subunit protein bS18</fullName>
    </recommendedName>
    <alternativeName>
        <fullName evidence="2">30S ribosomal protein S18</fullName>
    </alternativeName>
</protein>
<name>RS18_SHEB8</name>
<evidence type="ECO:0000255" key="1">
    <source>
        <dbReference type="HAMAP-Rule" id="MF_00270"/>
    </source>
</evidence>
<evidence type="ECO:0000305" key="2"/>
<sequence>MARYFRRRKFCRFTAEGVAEIDYKDIVTLKNYITESGKIVPSRITGTSAKYQRQLARAIKRARYLSLLPYTDLHQ</sequence>
<accession>A6WJ81</accession>
<reference key="1">
    <citation type="submission" date="2007-07" db="EMBL/GenBank/DDBJ databases">
        <title>Complete sequence of chromosome of Shewanella baltica OS185.</title>
        <authorList>
            <consortium name="US DOE Joint Genome Institute"/>
            <person name="Copeland A."/>
            <person name="Lucas S."/>
            <person name="Lapidus A."/>
            <person name="Barry K."/>
            <person name="Glavina del Rio T."/>
            <person name="Dalin E."/>
            <person name="Tice H."/>
            <person name="Pitluck S."/>
            <person name="Sims D."/>
            <person name="Brettin T."/>
            <person name="Bruce D."/>
            <person name="Detter J.C."/>
            <person name="Han C."/>
            <person name="Schmutz J."/>
            <person name="Larimer F."/>
            <person name="Land M."/>
            <person name="Hauser L."/>
            <person name="Kyrpides N."/>
            <person name="Mikhailova N."/>
            <person name="Brettar I."/>
            <person name="Rodrigues J."/>
            <person name="Konstantinidis K."/>
            <person name="Tiedje J."/>
            <person name="Richardson P."/>
        </authorList>
    </citation>
    <scope>NUCLEOTIDE SEQUENCE [LARGE SCALE GENOMIC DNA]</scope>
    <source>
        <strain>OS185</strain>
    </source>
</reference>
<dbReference type="EMBL" id="CP000753">
    <property type="protein sequence ID" value="ABS06870.1"/>
    <property type="molecule type" value="Genomic_DNA"/>
</dbReference>
<dbReference type="RefSeq" id="WP_006083042.1">
    <property type="nucleotide sequence ID" value="NC_009665.1"/>
</dbReference>
<dbReference type="SMR" id="A6WJ81"/>
<dbReference type="GeneID" id="94726693"/>
<dbReference type="KEGG" id="sbm:Shew185_0713"/>
<dbReference type="HOGENOM" id="CLU_148710_2_3_6"/>
<dbReference type="GO" id="GO:0022627">
    <property type="term" value="C:cytosolic small ribosomal subunit"/>
    <property type="evidence" value="ECO:0007669"/>
    <property type="project" value="TreeGrafter"/>
</dbReference>
<dbReference type="GO" id="GO:0070181">
    <property type="term" value="F:small ribosomal subunit rRNA binding"/>
    <property type="evidence" value="ECO:0007669"/>
    <property type="project" value="TreeGrafter"/>
</dbReference>
<dbReference type="GO" id="GO:0003735">
    <property type="term" value="F:structural constituent of ribosome"/>
    <property type="evidence" value="ECO:0007669"/>
    <property type="project" value="InterPro"/>
</dbReference>
<dbReference type="GO" id="GO:0006412">
    <property type="term" value="P:translation"/>
    <property type="evidence" value="ECO:0007669"/>
    <property type="project" value="UniProtKB-UniRule"/>
</dbReference>
<dbReference type="FunFam" id="4.10.640.10:FF:000001">
    <property type="entry name" value="30S ribosomal protein S18"/>
    <property type="match status" value="1"/>
</dbReference>
<dbReference type="Gene3D" id="4.10.640.10">
    <property type="entry name" value="Ribosomal protein S18"/>
    <property type="match status" value="1"/>
</dbReference>
<dbReference type="HAMAP" id="MF_00270">
    <property type="entry name" value="Ribosomal_bS18"/>
    <property type="match status" value="1"/>
</dbReference>
<dbReference type="InterPro" id="IPR001648">
    <property type="entry name" value="Ribosomal_bS18"/>
</dbReference>
<dbReference type="InterPro" id="IPR018275">
    <property type="entry name" value="Ribosomal_bS18_CS"/>
</dbReference>
<dbReference type="InterPro" id="IPR036870">
    <property type="entry name" value="Ribosomal_bS18_sf"/>
</dbReference>
<dbReference type="NCBIfam" id="TIGR00165">
    <property type="entry name" value="S18"/>
    <property type="match status" value="1"/>
</dbReference>
<dbReference type="PANTHER" id="PTHR13479">
    <property type="entry name" value="30S RIBOSOMAL PROTEIN S18"/>
    <property type="match status" value="1"/>
</dbReference>
<dbReference type="PANTHER" id="PTHR13479:SF40">
    <property type="entry name" value="SMALL RIBOSOMAL SUBUNIT PROTEIN BS18M"/>
    <property type="match status" value="1"/>
</dbReference>
<dbReference type="Pfam" id="PF01084">
    <property type="entry name" value="Ribosomal_S18"/>
    <property type="match status" value="1"/>
</dbReference>
<dbReference type="PRINTS" id="PR00974">
    <property type="entry name" value="RIBOSOMALS18"/>
</dbReference>
<dbReference type="SUPFAM" id="SSF46911">
    <property type="entry name" value="Ribosomal protein S18"/>
    <property type="match status" value="1"/>
</dbReference>
<dbReference type="PROSITE" id="PS00057">
    <property type="entry name" value="RIBOSOMAL_S18"/>
    <property type="match status" value="1"/>
</dbReference>